<keyword id="KW-0067">ATP-binding</keyword>
<keyword id="KW-0119">Carbohydrate metabolism</keyword>
<keyword id="KW-0418">Kinase</keyword>
<keyword id="KW-0547">Nucleotide-binding</keyword>
<keyword id="KW-0808">Transferase</keyword>
<accession>A4Y4H1</accession>
<organism>
    <name type="scientific">Shewanella putrefaciens (strain CN-32 / ATCC BAA-453)</name>
    <dbReference type="NCBI Taxonomy" id="319224"/>
    <lineage>
        <taxon>Bacteria</taxon>
        <taxon>Pseudomonadati</taxon>
        <taxon>Pseudomonadota</taxon>
        <taxon>Gammaproteobacteria</taxon>
        <taxon>Alteromonadales</taxon>
        <taxon>Shewanellaceae</taxon>
        <taxon>Shewanella</taxon>
    </lineage>
</organism>
<comment type="function">
    <text evidence="1">Catalyzes the specific phosphorylation of 1,6-anhydro-N-acetylmuramic acid (anhMurNAc) with the simultaneous cleavage of the 1,6-anhydro ring, generating MurNAc-6-P. Is required for the utilization of anhMurNAc either imported from the medium or derived from its own cell wall murein, and thus plays a role in cell wall recycling.</text>
</comment>
<comment type="catalytic activity">
    <reaction evidence="1">
        <text>1,6-anhydro-N-acetyl-beta-muramate + ATP + H2O = N-acetyl-D-muramate 6-phosphate + ADP + H(+)</text>
        <dbReference type="Rhea" id="RHEA:24952"/>
        <dbReference type="ChEBI" id="CHEBI:15377"/>
        <dbReference type="ChEBI" id="CHEBI:15378"/>
        <dbReference type="ChEBI" id="CHEBI:30616"/>
        <dbReference type="ChEBI" id="CHEBI:58690"/>
        <dbReference type="ChEBI" id="CHEBI:58722"/>
        <dbReference type="ChEBI" id="CHEBI:456216"/>
        <dbReference type="EC" id="2.7.1.170"/>
    </reaction>
</comment>
<comment type="pathway">
    <text evidence="1">Amino-sugar metabolism; 1,6-anhydro-N-acetylmuramate degradation.</text>
</comment>
<comment type="pathway">
    <text evidence="1">Cell wall biogenesis; peptidoglycan recycling.</text>
</comment>
<comment type="similarity">
    <text evidence="1">Belongs to the anhydro-N-acetylmuramic acid kinase family.</text>
</comment>
<sequence>MKNAYYIGLMSGTSMDGVDAVLVDFSGPQPQLICSHTEAIPSHLLKGLQRLCLPGADEINRLGRLDRNVGQLFALAVNNLLAKCNIAKEDIIAIGSHGQTVRHMPNLEVGFTLQIGDPNTIATETGIDVIADFRRKDIALGGQGAPLVPAFHQQTFAEIDKKRIILNIGGIANVTYLPGTSEHVLGFDTGPGNTLIDAWIQHVKSEPFDKNGEWAASGKTNPDLLAQLLSHPYFSLAYPKSTGRELFNQAWLEQQLSPFNHLDEEDIQSTLLDMTCHSIARDVIKLSPEGELFVCGGGAFNTQLMQRLAALLPGYKLDTTSALGVDPKWAEGIAFAWLAMRNHLGLPANLPAVTGASREAVLGGRFSAK</sequence>
<gene>
    <name evidence="1" type="primary">anmK</name>
    <name type="ordered locus">Sputcn32_1126</name>
</gene>
<name>ANMK_SHEPC</name>
<dbReference type="EC" id="2.7.1.170" evidence="1"/>
<dbReference type="EMBL" id="CP000681">
    <property type="protein sequence ID" value="ABP74854.1"/>
    <property type="molecule type" value="Genomic_DNA"/>
</dbReference>
<dbReference type="SMR" id="A4Y4H1"/>
<dbReference type="STRING" id="319224.Sputcn32_1126"/>
<dbReference type="KEGG" id="spc:Sputcn32_1126"/>
<dbReference type="eggNOG" id="COG2377">
    <property type="taxonomic scope" value="Bacteria"/>
</dbReference>
<dbReference type="HOGENOM" id="CLU_038782_0_0_6"/>
<dbReference type="UniPathway" id="UPA00343"/>
<dbReference type="UniPathway" id="UPA00544"/>
<dbReference type="GO" id="GO:0005524">
    <property type="term" value="F:ATP binding"/>
    <property type="evidence" value="ECO:0007669"/>
    <property type="project" value="UniProtKB-UniRule"/>
</dbReference>
<dbReference type="GO" id="GO:0016301">
    <property type="term" value="F:kinase activity"/>
    <property type="evidence" value="ECO:0007669"/>
    <property type="project" value="UniProtKB-KW"/>
</dbReference>
<dbReference type="GO" id="GO:0016773">
    <property type="term" value="F:phosphotransferase activity, alcohol group as acceptor"/>
    <property type="evidence" value="ECO:0007669"/>
    <property type="project" value="UniProtKB-UniRule"/>
</dbReference>
<dbReference type="GO" id="GO:0097175">
    <property type="term" value="P:1,6-anhydro-N-acetyl-beta-muramic acid catabolic process"/>
    <property type="evidence" value="ECO:0007669"/>
    <property type="project" value="UniProtKB-UniRule"/>
</dbReference>
<dbReference type="GO" id="GO:0006040">
    <property type="term" value="P:amino sugar metabolic process"/>
    <property type="evidence" value="ECO:0007669"/>
    <property type="project" value="InterPro"/>
</dbReference>
<dbReference type="GO" id="GO:0009254">
    <property type="term" value="P:peptidoglycan turnover"/>
    <property type="evidence" value="ECO:0007669"/>
    <property type="project" value="UniProtKB-UniRule"/>
</dbReference>
<dbReference type="CDD" id="cd24050">
    <property type="entry name" value="ASKHA_NBD_ANMK"/>
    <property type="match status" value="1"/>
</dbReference>
<dbReference type="Gene3D" id="3.30.420.40">
    <property type="match status" value="2"/>
</dbReference>
<dbReference type="HAMAP" id="MF_01270">
    <property type="entry name" value="AnhMurNAc_kinase"/>
    <property type="match status" value="1"/>
</dbReference>
<dbReference type="InterPro" id="IPR005338">
    <property type="entry name" value="Anhydro_N_Ac-Mur_kinase"/>
</dbReference>
<dbReference type="InterPro" id="IPR043129">
    <property type="entry name" value="ATPase_NBD"/>
</dbReference>
<dbReference type="NCBIfam" id="NF007139">
    <property type="entry name" value="PRK09585.1-3"/>
    <property type="match status" value="1"/>
</dbReference>
<dbReference type="NCBIfam" id="NF007148">
    <property type="entry name" value="PRK09585.3-2"/>
    <property type="match status" value="1"/>
</dbReference>
<dbReference type="PANTHER" id="PTHR30605">
    <property type="entry name" value="ANHYDRO-N-ACETYLMURAMIC ACID KINASE"/>
    <property type="match status" value="1"/>
</dbReference>
<dbReference type="PANTHER" id="PTHR30605:SF0">
    <property type="entry name" value="ANHYDRO-N-ACETYLMURAMIC ACID KINASE"/>
    <property type="match status" value="1"/>
</dbReference>
<dbReference type="Pfam" id="PF03702">
    <property type="entry name" value="AnmK"/>
    <property type="match status" value="1"/>
</dbReference>
<dbReference type="SUPFAM" id="SSF53067">
    <property type="entry name" value="Actin-like ATPase domain"/>
    <property type="match status" value="1"/>
</dbReference>
<evidence type="ECO:0000255" key="1">
    <source>
        <dbReference type="HAMAP-Rule" id="MF_01270"/>
    </source>
</evidence>
<protein>
    <recommendedName>
        <fullName evidence="1">Anhydro-N-acetylmuramic acid kinase</fullName>
        <ecNumber evidence="1">2.7.1.170</ecNumber>
    </recommendedName>
    <alternativeName>
        <fullName evidence="1">AnhMurNAc kinase</fullName>
    </alternativeName>
</protein>
<reference key="1">
    <citation type="submission" date="2007-04" db="EMBL/GenBank/DDBJ databases">
        <title>Complete sequence of Shewanella putrefaciens CN-32.</title>
        <authorList>
            <consortium name="US DOE Joint Genome Institute"/>
            <person name="Copeland A."/>
            <person name="Lucas S."/>
            <person name="Lapidus A."/>
            <person name="Barry K."/>
            <person name="Detter J.C."/>
            <person name="Glavina del Rio T."/>
            <person name="Hammon N."/>
            <person name="Israni S."/>
            <person name="Dalin E."/>
            <person name="Tice H."/>
            <person name="Pitluck S."/>
            <person name="Chain P."/>
            <person name="Malfatti S."/>
            <person name="Shin M."/>
            <person name="Vergez L."/>
            <person name="Schmutz J."/>
            <person name="Larimer F."/>
            <person name="Land M."/>
            <person name="Hauser L."/>
            <person name="Kyrpides N."/>
            <person name="Mikhailova N."/>
            <person name="Romine M.F."/>
            <person name="Fredrickson J."/>
            <person name="Tiedje J."/>
            <person name="Richardson P."/>
        </authorList>
    </citation>
    <scope>NUCLEOTIDE SEQUENCE [LARGE SCALE GENOMIC DNA]</scope>
    <source>
        <strain>CN-32 / ATCC BAA-453</strain>
    </source>
</reference>
<proteinExistence type="inferred from homology"/>
<feature type="chain" id="PRO_1000067364" description="Anhydro-N-acetylmuramic acid kinase">
    <location>
        <begin position="1"/>
        <end position="369"/>
    </location>
</feature>
<feature type="binding site" evidence="1">
    <location>
        <begin position="12"/>
        <end position="19"/>
    </location>
    <ligand>
        <name>ATP</name>
        <dbReference type="ChEBI" id="CHEBI:30616"/>
    </ligand>
</feature>